<name>SUCC_EHRCR</name>
<comment type="function">
    <text evidence="1">Succinyl-CoA synthetase functions in the citric acid cycle (TCA), coupling the hydrolysis of succinyl-CoA to the synthesis of either ATP or GTP and thus represents the only step of substrate-level phosphorylation in the TCA. The beta subunit provides nucleotide specificity of the enzyme and binds the substrate succinate, while the binding sites for coenzyme A and phosphate are found in the alpha subunit.</text>
</comment>
<comment type="catalytic activity">
    <reaction evidence="1">
        <text>succinate + ATP + CoA = succinyl-CoA + ADP + phosphate</text>
        <dbReference type="Rhea" id="RHEA:17661"/>
        <dbReference type="ChEBI" id="CHEBI:30031"/>
        <dbReference type="ChEBI" id="CHEBI:30616"/>
        <dbReference type="ChEBI" id="CHEBI:43474"/>
        <dbReference type="ChEBI" id="CHEBI:57287"/>
        <dbReference type="ChEBI" id="CHEBI:57292"/>
        <dbReference type="ChEBI" id="CHEBI:456216"/>
        <dbReference type="EC" id="6.2.1.5"/>
    </reaction>
    <physiologicalReaction direction="right-to-left" evidence="1">
        <dbReference type="Rhea" id="RHEA:17663"/>
    </physiologicalReaction>
</comment>
<comment type="catalytic activity">
    <reaction evidence="1">
        <text>GTP + succinate + CoA = succinyl-CoA + GDP + phosphate</text>
        <dbReference type="Rhea" id="RHEA:22120"/>
        <dbReference type="ChEBI" id="CHEBI:30031"/>
        <dbReference type="ChEBI" id="CHEBI:37565"/>
        <dbReference type="ChEBI" id="CHEBI:43474"/>
        <dbReference type="ChEBI" id="CHEBI:57287"/>
        <dbReference type="ChEBI" id="CHEBI:57292"/>
        <dbReference type="ChEBI" id="CHEBI:58189"/>
    </reaction>
    <physiologicalReaction direction="right-to-left" evidence="1">
        <dbReference type="Rhea" id="RHEA:22122"/>
    </physiologicalReaction>
</comment>
<comment type="cofactor">
    <cofactor evidence="1">
        <name>Mg(2+)</name>
        <dbReference type="ChEBI" id="CHEBI:18420"/>
    </cofactor>
    <text evidence="1">Binds 1 Mg(2+) ion per subunit.</text>
</comment>
<comment type="pathway">
    <text evidence="1">Carbohydrate metabolism; tricarboxylic acid cycle; succinate from succinyl-CoA (ligase route): step 1/1.</text>
</comment>
<comment type="subunit">
    <text evidence="1">Heterotetramer of two alpha and two beta subunits.</text>
</comment>
<comment type="similarity">
    <text evidence="1">Belongs to the succinate/malate CoA ligase beta subunit family.</text>
</comment>
<reference key="1">
    <citation type="journal article" date="2006" name="PLoS Genet.">
        <title>Comparative genomics of emerging human ehrlichiosis agents.</title>
        <authorList>
            <person name="Dunning Hotopp J.C."/>
            <person name="Lin M."/>
            <person name="Madupu R."/>
            <person name="Crabtree J."/>
            <person name="Angiuoli S.V."/>
            <person name="Eisen J.A."/>
            <person name="Seshadri R."/>
            <person name="Ren Q."/>
            <person name="Wu M."/>
            <person name="Utterback T.R."/>
            <person name="Smith S."/>
            <person name="Lewis M."/>
            <person name="Khouri H."/>
            <person name="Zhang C."/>
            <person name="Niu H."/>
            <person name="Lin Q."/>
            <person name="Ohashi N."/>
            <person name="Zhi N."/>
            <person name="Nelson W.C."/>
            <person name="Brinkac L.M."/>
            <person name="Dodson R.J."/>
            <person name="Rosovitz M.J."/>
            <person name="Sundaram J.P."/>
            <person name="Daugherty S.C."/>
            <person name="Davidsen T."/>
            <person name="Durkin A.S."/>
            <person name="Gwinn M.L."/>
            <person name="Haft D.H."/>
            <person name="Selengut J.D."/>
            <person name="Sullivan S.A."/>
            <person name="Zafar N."/>
            <person name="Zhou L."/>
            <person name="Benahmed F."/>
            <person name="Forberger H."/>
            <person name="Halpin R."/>
            <person name="Mulligan S."/>
            <person name="Robinson J."/>
            <person name="White O."/>
            <person name="Rikihisa Y."/>
            <person name="Tettelin H."/>
        </authorList>
    </citation>
    <scope>NUCLEOTIDE SEQUENCE [LARGE SCALE GENOMIC DNA]</scope>
    <source>
        <strain>ATCC CRL-10679 / Arkansas</strain>
    </source>
</reference>
<dbReference type="EC" id="6.2.1.5" evidence="1"/>
<dbReference type="EMBL" id="CP000236">
    <property type="protein sequence ID" value="ABD45205.1"/>
    <property type="molecule type" value="Genomic_DNA"/>
</dbReference>
<dbReference type="RefSeq" id="WP_006010686.1">
    <property type="nucleotide sequence ID" value="NC_007799.1"/>
</dbReference>
<dbReference type="SMR" id="Q2GFL7"/>
<dbReference type="STRING" id="205920.ECH_0979"/>
<dbReference type="KEGG" id="ech:ECH_0979"/>
<dbReference type="eggNOG" id="COG0045">
    <property type="taxonomic scope" value="Bacteria"/>
</dbReference>
<dbReference type="HOGENOM" id="CLU_037430_0_2_5"/>
<dbReference type="OrthoDB" id="9802602at2"/>
<dbReference type="UniPathway" id="UPA00223">
    <property type="reaction ID" value="UER00999"/>
</dbReference>
<dbReference type="Proteomes" id="UP000008320">
    <property type="component" value="Chromosome"/>
</dbReference>
<dbReference type="GO" id="GO:0005829">
    <property type="term" value="C:cytosol"/>
    <property type="evidence" value="ECO:0007669"/>
    <property type="project" value="TreeGrafter"/>
</dbReference>
<dbReference type="GO" id="GO:0042709">
    <property type="term" value="C:succinate-CoA ligase complex"/>
    <property type="evidence" value="ECO:0007669"/>
    <property type="project" value="TreeGrafter"/>
</dbReference>
<dbReference type="GO" id="GO:0005524">
    <property type="term" value="F:ATP binding"/>
    <property type="evidence" value="ECO:0007669"/>
    <property type="project" value="UniProtKB-UniRule"/>
</dbReference>
<dbReference type="GO" id="GO:0000287">
    <property type="term" value="F:magnesium ion binding"/>
    <property type="evidence" value="ECO:0007669"/>
    <property type="project" value="UniProtKB-UniRule"/>
</dbReference>
<dbReference type="GO" id="GO:0004775">
    <property type="term" value="F:succinate-CoA ligase (ADP-forming) activity"/>
    <property type="evidence" value="ECO:0007669"/>
    <property type="project" value="UniProtKB-UniRule"/>
</dbReference>
<dbReference type="GO" id="GO:0004776">
    <property type="term" value="F:succinate-CoA ligase (GDP-forming) activity"/>
    <property type="evidence" value="ECO:0007669"/>
    <property type="project" value="RHEA"/>
</dbReference>
<dbReference type="GO" id="GO:0006104">
    <property type="term" value="P:succinyl-CoA metabolic process"/>
    <property type="evidence" value="ECO:0007669"/>
    <property type="project" value="TreeGrafter"/>
</dbReference>
<dbReference type="GO" id="GO:0006099">
    <property type="term" value="P:tricarboxylic acid cycle"/>
    <property type="evidence" value="ECO:0007669"/>
    <property type="project" value="UniProtKB-UniRule"/>
</dbReference>
<dbReference type="FunFam" id="3.30.1490.20:FF:000002">
    <property type="entry name" value="Succinate--CoA ligase [ADP-forming] subunit beta"/>
    <property type="match status" value="1"/>
</dbReference>
<dbReference type="FunFam" id="3.30.470.20:FF:000002">
    <property type="entry name" value="Succinate--CoA ligase [ADP-forming] subunit beta"/>
    <property type="match status" value="1"/>
</dbReference>
<dbReference type="FunFam" id="3.40.50.261:FF:000001">
    <property type="entry name" value="Succinate--CoA ligase [ADP-forming] subunit beta"/>
    <property type="match status" value="1"/>
</dbReference>
<dbReference type="Gene3D" id="3.30.1490.20">
    <property type="entry name" value="ATP-grasp fold, A domain"/>
    <property type="match status" value="1"/>
</dbReference>
<dbReference type="Gene3D" id="3.30.470.20">
    <property type="entry name" value="ATP-grasp fold, B domain"/>
    <property type="match status" value="1"/>
</dbReference>
<dbReference type="Gene3D" id="3.40.50.261">
    <property type="entry name" value="Succinyl-CoA synthetase domains"/>
    <property type="match status" value="1"/>
</dbReference>
<dbReference type="HAMAP" id="MF_00558">
    <property type="entry name" value="Succ_CoA_beta"/>
    <property type="match status" value="1"/>
</dbReference>
<dbReference type="InterPro" id="IPR011761">
    <property type="entry name" value="ATP-grasp"/>
</dbReference>
<dbReference type="InterPro" id="IPR013650">
    <property type="entry name" value="ATP-grasp_succ-CoA_synth-type"/>
</dbReference>
<dbReference type="InterPro" id="IPR013815">
    <property type="entry name" value="ATP_grasp_subdomain_1"/>
</dbReference>
<dbReference type="InterPro" id="IPR017866">
    <property type="entry name" value="Succ-CoA_synthase_bsu_CS"/>
</dbReference>
<dbReference type="InterPro" id="IPR005811">
    <property type="entry name" value="SUCC_ACL_C"/>
</dbReference>
<dbReference type="InterPro" id="IPR005809">
    <property type="entry name" value="Succ_CoA_ligase-like_bsu"/>
</dbReference>
<dbReference type="InterPro" id="IPR016102">
    <property type="entry name" value="Succinyl-CoA_synth-like"/>
</dbReference>
<dbReference type="NCBIfam" id="NF001913">
    <property type="entry name" value="PRK00696.1"/>
    <property type="match status" value="1"/>
</dbReference>
<dbReference type="NCBIfam" id="TIGR01016">
    <property type="entry name" value="sucCoAbeta"/>
    <property type="match status" value="1"/>
</dbReference>
<dbReference type="PANTHER" id="PTHR11815:SF10">
    <property type="entry name" value="SUCCINATE--COA LIGASE [GDP-FORMING] SUBUNIT BETA, MITOCHONDRIAL"/>
    <property type="match status" value="1"/>
</dbReference>
<dbReference type="PANTHER" id="PTHR11815">
    <property type="entry name" value="SUCCINYL-COA SYNTHETASE BETA CHAIN"/>
    <property type="match status" value="1"/>
</dbReference>
<dbReference type="Pfam" id="PF08442">
    <property type="entry name" value="ATP-grasp_2"/>
    <property type="match status" value="1"/>
</dbReference>
<dbReference type="Pfam" id="PF00549">
    <property type="entry name" value="Ligase_CoA"/>
    <property type="match status" value="1"/>
</dbReference>
<dbReference type="PIRSF" id="PIRSF001554">
    <property type="entry name" value="SucCS_beta"/>
    <property type="match status" value="1"/>
</dbReference>
<dbReference type="SUPFAM" id="SSF56059">
    <property type="entry name" value="Glutathione synthetase ATP-binding domain-like"/>
    <property type="match status" value="1"/>
</dbReference>
<dbReference type="SUPFAM" id="SSF52210">
    <property type="entry name" value="Succinyl-CoA synthetase domains"/>
    <property type="match status" value="1"/>
</dbReference>
<dbReference type="PROSITE" id="PS50975">
    <property type="entry name" value="ATP_GRASP"/>
    <property type="match status" value="1"/>
</dbReference>
<dbReference type="PROSITE" id="PS01217">
    <property type="entry name" value="SUCCINYL_COA_LIG_3"/>
    <property type="match status" value="1"/>
</dbReference>
<accession>Q2GFL7</accession>
<gene>
    <name evidence="1" type="primary">sucC</name>
    <name type="ordered locus">ECH_0979</name>
</gene>
<evidence type="ECO:0000255" key="1">
    <source>
        <dbReference type="HAMAP-Rule" id="MF_00558"/>
    </source>
</evidence>
<protein>
    <recommendedName>
        <fullName evidence="1">Succinate--CoA ligase [ADP-forming] subunit beta</fullName>
        <ecNumber evidence="1">6.2.1.5</ecNumber>
    </recommendedName>
    <alternativeName>
        <fullName evidence="1">Succinyl-CoA synthetase subunit beta</fullName>
        <shortName evidence="1">SCS-beta</shortName>
    </alternativeName>
</protein>
<sequence length="387" mass="41945">MNIHEYQAKHILSKFGVNVPKGVVVHSLGEVDGALSQLNSKVVVVKAQIHAGGRGKAGGVVVSRTLDETKTSIKNMLGSTLITHQTSKDGQKVRKVYLEEGCNIKKEYYISAIVNRKQGQVSIIFSTEGGVDIEEVAATSPEKVIVCNINPVFGFQGFHGRNLCFDSNLSLDQTRKISDIAGKIYKAVLSTDANQIEINPLVETSSGEFIALDAKINFDDNALYRHPDIQELRDYDEEIKEEIEASKHGLSYIKMDGNIGCMVNGAGLAMATMDIIKYYGAEPANFLDVGGGASQKTVTEAFKIILADDKVNGILVNIFGGIMRCDIIANGIIAAIQEIGINVPLVVRLSGTNFELGKKLLDDSNLNIITANDLSEAAYNIVNIVRK</sequence>
<feature type="chain" id="PRO_1000082077" description="Succinate--CoA ligase [ADP-forming] subunit beta">
    <location>
        <begin position="1"/>
        <end position="387"/>
    </location>
</feature>
<feature type="domain" description="ATP-grasp" evidence="1">
    <location>
        <begin position="9"/>
        <end position="244"/>
    </location>
</feature>
<feature type="binding site" evidence="1">
    <location>
        <position position="46"/>
    </location>
    <ligand>
        <name>ATP</name>
        <dbReference type="ChEBI" id="CHEBI:30616"/>
    </ligand>
</feature>
<feature type="binding site" evidence="1">
    <location>
        <begin position="53"/>
        <end position="55"/>
    </location>
    <ligand>
        <name>ATP</name>
        <dbReference type="ChEBI" id="CHEBI:30616"/>
    </ligand>
</feature>
<feature type="binding site" evidence="1">
    <location>
        <position position="99"/>
    </location>
    <ligand>
        <name>ATP</name>
        <dbReference type="ChEBI" id="CHEBI:30616"/>
    </ligand>
</feature>
<feature type="binding site" evidence="1">
    <location>
        <position position="102"/>
    </location>
    <ligand>
        <name>ATP</name>
        <dbReference type="ChEBI" id="CHEBI:30616"/>
    </ligand>
</feature>
<feature type="binding site" evidence="1">
    <location>
        <position position="107"/>
    </location>
    <ligand>
        <name>ATP</name>
        <dbReference type="ChEBI" id="CHEBI:30616"/>
    </ligand>
</feature>
<feature type="binding site" evidence="1">
    <location>
        <position position="199"/>
    </location>
    <ligand>
        <name>Mg(2+)</name>
        <dbReference type="ChEBI" id="CHEBI:18420"/>
    </ligand>
</feature>
<feature type="binding site" evidence="1">
    <location>
        <position position="213"/>
    </location>
    <ligand>
        <name>Mg(2+)</name>
        <dbReference type="ChEBI" id="CHEBI:18420"/>
    </ligand>
</feature>
<feature type="binding site" evidence="1">
    <location>
        <position position="264"/>
    </location>
    <ligand>
        <name>substrate</name>
        <note>ligand shared with subunit alpha</note>
    </ligand>
</feature>
<feature type="binding site" evidence="1">
    <location>
        <begin position="321"/>
        <end position="323"/>
    </location>
    <ligand>
        <name>substrate</name>
        <note>ligand shared with subunit alpha</note>
    </ligand>
</feature>
<keyword id="KW-0067">ATP-binding</keyword>
<keyword id="KW-0436">Ligase</keyword>
<keyword id="KW-0460">Magnesium</keyword>
<keyword id="KW-0479">Metal-binding</keyword>
<keyword id="KW-0547">Nucleotide-binding</keyword>
<keyword id="KW-1185">Reference proteome</keyword>
<keyword id="KW-0816">Tricarboxylic acid cycle</keyword>
<organism>
    <name type="scientific">Ehrlichia chaffeensis (strain ATCC CRL-10679 / Arkansas)</name>
    <dbReference type="NCBI Taxonomy" id="205920"/>
    <lineage>
        <taxon>Bacteria</taxon>
        <taxon>Pseudomonadati</taxon>
        <taxon>Pseudomonadota</taxon>
        <taxon>Alphaproteobacteria</taxon>
        <taxon>Rickettsiales</taxon>
        <taxon>Anaplasmataceae</taxon>
        <taxon>Ehrlichia</taxon>
    </lineage>
</organism>
<proteinExistence type="inferred from homology"/>